<comment type="function">
    <text>This protein promotes the GTP-dependent binding of aminoacyl-tRNA to the A-site of ribosomes during protein biosynthesis.</text>
</comment>
<comment type="subcellular location">
    <subcellularLocation>
        <location>Cytoplasm</location>
    </subcellularLocation>
</comment>
<comment type="similarity">
    <text evidence="2">Belongs to the TRAFAC class translation factor GTPase superfamily. Classic translation factor GTPase family. EF-Tu/EF-1A subfamily.</text>
</comment>
<name>EF1A2_EUPCR</name>
<keyword id="KW-0963">Cytoplasm</keyword>
<keyword id="KW-0251">Elongation factor</keyword>
<keyword id="KW-0342">GTP-binding</keyword>
<keyword id="KW-0547">Nucleotide-binding</keyword>
<keyword id="KW-0648">Protein biosynthesis</keyword>
<protein>
    <recommendedName>
        <fullName>Elongation factor 1-alpha 2</fullName>
        <shortName>EF-1-alpha-2</shortName>
    </recommendedName>
</protein>
<feature type="chain" id="PRO_0000090924" description="Elongation factor 1-alpha 2">
    <location>
        <begin position="1"/>
        <end position="439"/>
    </location>
</feature>
<feature type="domain" description="tr-type G" evidence="2">
    <location>
        <begin position="6"/>
        <end position="229"/>
    </location>
</feature>
<feature type="region of interest" description="G1" evidence="2">
    <location>
        <begin position="15"/>
        <end position="22"/>
    </location>
</feature>
<feature type="region of interest" description="G2" evidence="2">
    <location>
        <begin position="71"/>
        <end position="75"/>
    </location>
</feature>
<feature type="region of interest" description="G3" evidence="2">
    <location>
        <begin position="92"/>
        <end position="95"/>
    </location>
</feature>
<feature type="region of interest" description="G4" evidence="2">
    <location>
        <begin position="154"/>
        <end position="157"/>
    </location>
</feature>
<feature type="region of interest" description="G5" evidence="2">
    <location>
        <begin position="193"/>
        <end position="195"/>
    </location>
</feature>
<feature type="binding site" evidence="1">
    <location>
        <begin position="15"/>
        <end position="22"/>
    </location>
    <ligand>
        <name>GTP</name>
        <dbReference type="ChEBI" id="CHEBI:37565"/>
    </ligand>
</feature>
<feature type="binding site" evidence="1">
    <location>
        <begin position="92"/>
        <end position="96"/>
    </location>
    <ligand>
        <name>GTP</name>
        <dbReference type="ChEBI" id="CHEBI:37565"/>
    </ligand>
</feature>
<feature type="binding site" evidence="1">
    <location>
        <begin position="154"/>
        <end position="157"/>
    </location>
    <ligand>
        <name>GTP</name>
        <dbReference type="ChEBI" id="CHEBI:37565"/>
    </ligand>
</feature>
<reference key="1">
    <citation type="journal article" date="1996" name="Gene">
        <title>Two different macronuclear EF-1 alpha-encoding genes of the ciliate Euplotes crassus are very dissimilar in their sequences, copy numbers and transcriptional activities.</title>
        <authorList>
            <person name="Bergemann J."/>
            <person name="Florian V."/>
            <person name="Kremser T."/>
            <person name="Klein A."/>
        </authorList>
    </citation>
    <scope>NUCLEOTIDE SEQUENCE [GENOMIC DNA]</scope>
    <source>
        <strain>POR3</strain>
    </source>
</reference>
<evidence type="ECO:0000250" key="1"/>
<evidence type="ECO:0000255" key="2">
    <source>
        <dbReference type="PROSITE-ProRule" id="PRU01059"/>
    </source>
</evidence>
<sequence length="439" mass="48697">MERKEKDHLNLVVIGHVDSGKSTTTGHLIYKLGGIDERTLAKLEEKALELNKASFKYAFVLDNLKAEQERGITINCALRQFDTPSRSYTIIDAPGHKDFIKNMITGTSQADAAVLIIAAKKGEFEDGFSREGSTKDHALLAYTMGIKQAIVAINKMDTIDYDEERFNEIVENVSDHLGKIGYKKENVKYIPISGFDGDNMLEQSENLPWYKGPTLTEALDEFKVPKRPIKKPLRVPIQDVYKIAGIGTVPVGRVETGVLKRGMEVQFTTGATSEVKSLEAHHNKLEEAEPGLNVGFNVRLEAKEIKAGHVCGDAKNDPPKNAESFIAQVIVMNHPGHIKAGYQPVLDIHTAHVATKFKTLLSKNEARTGKLIEEAPKFLKNGESGIVELVPTKPLCVEEFSKYAALGRFVIRDMKRTVAVGVIQEVIHKKETKKKASKR</sequence>
<organism>
    <name type="scientific">Euplotes crassus</name>
    <dbReference type="NCBI Taxonomy" id="5936"/>
    <lineage>
        <taxon>Eukaryota</taxon>
        <taxon>Sar</taxon>
        <taxon>Alveolata</taxon>
        <taxon>Ciliophora</taxon>
        <taxon>Intramacronucleata</taxon>
        <taxon>Spirotrichea</taxon>
        <taxon>Hypotrichia</taxon>
        <taxon>Euplotida</taxon>
        <taxon>Euplotidae</taxon>
        <taxon>Moneuplotes</taxon>
    </lineage>
</organism>
<dbReference type="EMBL" id="U26267">
    <property type="protein sequence ID" value="AAB04941.1"/>
    <property type="molecule type" value="Genomic_DNA"/>
</dbReference>
<dbReference type="SMR" id="Q27140"/>
<dbReference type="GO" id="GO:0005737">
    <property type="term" value="C:cytoplasm"/>
    <property type="evidence" value="ECO:0007669"/>
    <property type="project" value="UniProtKB-SubCell"/>
</dbReference>
<dbReference type="GO" id="GO:0005525">
    <property type="term" value="F:GTP binding"/>
    <property type="evidence" value="ECO:0007669"/>
    <property type="project" value="UniProtKB-KW"/>
</dbReference>
<dbReference type="GO" id="GO:0003924">
    <property type="term" value="F:GTPase activity"/>
    <property type="evidence" value="ECO:0007669"/>
    <property type="project" value="InterPro"/>
</dbReference>
<dbReference type="GO" id="GO:0003746">
    <property type="term" value="F:translation elongation factor activity"/>
    <property type="evidence" value="ECO:0007669"/>
    <property type="project" value="UniProtKB-KW"/>
</dbReference>
<dbReference type="CDD" id="cd01883">
    <property type="entry name" value="EF1_alpha"/>
    <property type="match status" value="1"/>
</dbReference>
<dbReference type="CDD" id="cd03693">
    <property type="entry name" value="EF1_alpha_II"/>
    <property type="match status" value="1"/>
</dbReference>
<dbReference type="CDD" id="cd03705">
    <property type="entry name" value="EF1_alpha_III"/>
    <property type="match status" value="1"/>
</dbReference>
<dbReference type="FunFam" id="2.40.30.10:FF:000005">
    <property type="entry name" value="Elongation factor 1-alpha"/>
    <property type="match status" value="1"/>
</dbReference>
<dbReference type="FunFam" id="3.40.50.300:FF:000255">
    <property type="entry name" value="Elongation factor 1-alpha"/>
    <property type="match status" value="1"/>
</dbReference>
<dbReference type="Gene3D" id="3.40.50.300">
    <property type="entry name" value="P-loop containing nucleotide triphosphate hydrolases"/>
    <property type="match status" value="1"/>
</dbReference>
<dbReference type="Gene3D" id="2.40.30.10">
    <property type="entry name" value="Translation factors"/>
    <property type="match status" value="2"/>
</dbReference>
<dbReference type="InterPro" id="IPR004161">
    <property type="entry name" value="EFTu-like_2"/>
</dbReference>
<dbReference type="InterPro" id="IPR031157">
    <property type="entry name" value="G_TR_CS"/>
</dbReference>
<dbReference type="InterPro" id="IPR054696">
    <property type="entry name" value="GTP-eEF1A_C"/>
</dbReference>
<dbReference type="InterPro" id="IPR027417">
    <property type="entry name" value="P-loop_NTPase"/>
</dbReference>
<dbReference type="InterPro" id="IPR000795">
    <property type="entry name" value="T_Tr_GTP-bd_dom"/>
</dbReference>
<dbReference type="InterPro" id="IPR050100">
    <property type="entry name" value="TRAFAC_GTPase_members"/>
</dbReference>
<dbReference type="InterPro" id="IPR009000">
    <property type="entry name" value="Transl_B-barrel_sf"/>
</dbReference>
<dbReference type="InterPro" id="IPR009001">
    <property type="entry name" value="Transl_elong_EF1A/Init_IF2_C"/>
</dbReference>
<dbReference type="InterPro" id="IPR004539">
    <property type="entry name" value="Transl_elong_EF1A_euk/arc"/>
</dbReference>
<dbReference type="NCBIfam" id="TIGR00483">
    <property type="entry name" value="EF-1_alpha"/>
    <property type="match status" value="1"/>
</dbReference>
<dbReference type="NCBIfam" id="NF008969">
    <property type="entry name" value="PRK12317.1"/>
    <property type="match status" value="1"/>
</dbReference>
<dbReference type="PANTHER" id="PTHR23115">
    <property type="entry name" value="TRANSLATION FACTOR"/>
    <property type="match status" value="1"/>
</dbReference>
<dbReference type="Pfam" id="PF22594">
    <property type="entry name" value="GTP-eEF1A_C"/>
    <property type="match status" value="1"/>
</dbReference>
<dbReference type="Pfam" id="PF00009">
    <property type="entry name" value="GTP_EFTU"/>
    <property type="match status" value="1"/>
</dbReference>
<dbReference type="Pfam" id="PF03144">
    <property type="entry name" value="GTP_EFTU_D2"/>
    <property type="match status" value="1"/>
</dbReference>
<dbReference type="PRINTS" id="PR00315">
    <property type="entry name" value="ELONGATNFCT"/>
</dbReference>
<dbReference type="SUPFAM" id="SSF50465">
    <property type="entry name" value="EF-Tu/eEF-1alpha/eIF2-gamma C-terminal domain"/>
    <property type="match status" value="1"/>
</dbReference>
<dbReference type="SUPFAM" id="SSF52540">
    <property type="entry name" value="P-loop containing nucleoside triphosphate hydrolases"/>
    <property type="match status" value="1"/>
</dbReference>
<dbReference type="SUPFAM" id="SSF50447">
    <property type="entry name" value="Translation proteins"/>
    <property type="match status" value="1"/>
</dbReference>
<dbReference type="PROSITE" id="PS00301">
    <property type="entry name" value="G_TR_1"/>
    <property type="match status" value="1"/>
</dbReference>
<dbReference type="PROSITE" id="PS51722">
    <property type="entry name" value="G_TR_2"/>
    <property type="match status" value="1"/>
</dbReference>
<accession>Q27140</accession>
<gene>
    <name type="primary">EFA2</name>
</gene>
<proteinExistence type="inferred from homology"/>